<name>PHOA_ASPFU</name>
<organism>
    <name type="scientific">Aspergillus fumigatus (strain ATCC MYA-4609 / CBS 101355 / FGSC A1100 / Af293)</name>
    <name type="common">Neosartorya fumigata</name>
    <dbReference type="NCBI Taxonomy" id="330879"/>
    <lineage>
        <taxon>Eukaryota</taxon>
        <taxon>Fungi</taxon>
        <taxon>Dikarya</taxon>
        <taxon>Ascomycota</taxon>
        <taxon>Pezizomycotina</taxon>
        <taxon>Eurotiomycetes</taxon>
        <taxon>Eurotiomycetidae</taxon>
        <taxon>Eurotiales</taxon>
        <taxon>Aspergillaceae</taxon>
        <taxon>Aspergillus</taxon>
        <taxon>Aspergillus subgen. Fumigati</taxon>
    </lineage>
</organism>
<proteinExistence type="evidence at protein level"/>
<evidence type="ECO:0000250" key="1"/>
<evidence type="ECO:0000255" key="2"/>
<evidence type="ECO:0000269" key="3">
    <source>
    </source>
</evidence>
<evidence type="ECO:0000305" key="4"/>
<dbReference type="EC" id="3.1.3.2"/>
<dbReference type="EMBL" id="AF462065">
    <property type="protein sequence ID" value="AAL66381.1"/>
    <property type="molecule type" value="Genomic_DNA"/>
</dbReference>
<dbReference type="EMBL" id="AAHF01000007">
    <property type="protein sequence ID" value="EAL88069.1"/>
    <property type="status" value="ALT_SEQ"/>
    <property type="molecule type" value="Genomic_DNA"/>
</dbReference>
<dbReference type="RefSeq" id="XP_750107.1">
    <property type="nucleotide sequence ID" value="XM_745014.1"/>
</dbReference>
<dbReference type="SMR" id="Q8X176"/>
<dbReference type="STRING" id="330879.Q8X176"/>
<dbReference type="GlyCosmos" id="Q8X176">
    <property type="glycosylation" value="12 sites, No reported glycans"/>
</dbReference>
<dbReference type="GeneID" id="3507810"/>
<dbReference type="KEGG" id="afm:AFUA_1G03570"/>
<dbReference type="eggNOG" id="ENOG502QSRP">
    <property type="taxonomic scope" value="Eukaryota"/>
</dbReference>
<dbReference type="HOGENOM" id="CLU_027977_2_0_1"/>
<dbReference type="InParanoid" id="Q8X176"/>
<dbReference type="OrthoDB" id="5135119at2759"/>
<dbReference type="BRENDA" id="3.1.3.2">
    <property type="organism ID" value="508"/>
</dbReference>
<dbReference type="Proteomes" id="UP000002530">
    <property type="component" value="Chromosome 1"/>
</dbReference>
<dbReference type="GO" id="GO:0005886">
    <property type="term" value="C:plasma membrane"/>
    <property type="evidence" value="ECO:0007669"/>
    <property type="project" value="UniProtKB-SubCell"/>
</dbReference>
<dbReference type="GO" id="GO:0098552">
    <property type="term" value="C:side of membrane"/>
    <property type="evidence" value="ECO:0007669"/>
    <property type="project" value="UniProtKB-KW"/>
</dbReference>
<dbReference type="GO" id="GO:0003993">
    <property type="term" value="F:acid phosphatase activity"/>
    <property type="evidence" value="ECO:0007669"/>
    <property type="project" value="UniProtKB-EC"/>
</dbReference>
<dbReference type="GO" id="GO:0071555">
    <property type="term" value="P:cell wall organization"/>
    <property type="evidence" value="ECO:0007669"/>
    <property type="project" value="UniProtKB-KW"/>
</dbReference>
<dbReference type="GO" id="GO:0009395">
    <property type="term" value="P:phospholipid catabolic process"/>
    <property type="evidence" value="ECO:0000318"/>
    <property type="project" value="GO_Central"/>
</dbReference>
<dbReference type="FunFam" id="3.40.720.10:FF:000043">
    <property type="entry name" value="Acid phosphatase PHOa"/>
    <property type="match status" value="1"/>
</dbReference>
<dbReference type="Gene3D" id="3.40.720.10">
    <property type="entry name" value="Alkaline Phosphatase, subunit A"/>
    <property type="match status" value="1"/>
</dbReference>
<dbReference type="InterPro" id="IPR017850">
    <property type="entry name" value="Alkaline_phosphatase_core_sf"/>
</dbReference>
<dbReference type="InterPro" id="IPR007312">
    <property type="entry name" value="Phosphoesterase"/>
</dbReference>
<dbReference type="PANTHER" id="PTHR31956:SF8">
    <property type="entry name" value="ACID PHOSPHATASE PHOA (AFU_ORTHOLOGUE AFUA_1G03570)"/>
    <property type="match status" value="1"/>
</dbReference>
<dbReference type="PANTHER" id="PTHR31956">
    <property type="entry name" value="NON-SPECIFIC PHOSPHOLIPASE C4-RELATED"/>
    <property type="match status" value="1"/>
</dbReference>
<dbReference type="Pfam" id="PF04185">
    <property type="entry name" value="Phosphoesterase"/>
    <property type="match status" value="1"/>
</dbReference>
<sequence>MKPSVATLLATVSLVYAQTATEKEPSLSAIESAAASIQPYSPVSNVEGVAFNRFFQVWLENIDYEDAAADENMKWLASQGILLTNFYAVTHPSEPNYCAAVGGDTFGMDNDNFNQIPANVSTVADLLDTKNIAWGEYQEHLPYPGFQGFNYSNQETYVNDYVRKHNPLVLYDSVTKNSTRLRQIKNFTSFEDDLANKKLPQWAFITPNMTNDAHDTNITFGAKWERSWIAPLLNNSYFMNDTLILLTFDEDGTYSKSNKIFSVLLGGAIPDELKGTQDDTFYTHYSVIASVSANWGLPSLGRWDCGANILEIVANKTGYVNYDVDTTNLRLNETYPGPMSAGEYSKYSPVWPNALTRGDCSAGHGILDIVKETYANTEPTYNYSSPFPYDTASNYNTKVTATKKNVTGTHRSSSSSSPSASSNAAVSAVAPAAGVSGLLLGLALNLL</sequence>
<feature type="signal peptide" evidence="2">
    <location>
        <begin position="1"/>
        <end position="17"/>
    </location>
</feature>
<feature type="chain" id="PRO_0000245560" description="Acid phosphatase">
    <location>
        <begin position="18"/>
        <end position="419"/>
    </location>
</feature>
<feature type="propeptide" id="PRO_0000245561" description="Removed in mature form" evidence="2">
    <location>
        <begin position="420"/>
        <end position="447"/>
    </location>
</feature>
<feature type="active site" description="Proton donor" evidence="1">
    <location>
        <position position="215"/>
    </location>
</feature>
<feature type="lipid moiety-binding region" description="GPI-like-anchor amidated serine" evidence="2">
    <location>
        <position position="419"/>
    </location>
</feature>
<feature type="glycosylation site" description="N-linked (GlcNAc...) asparagine" evidence="2">
    <location>
        <position position="119"/>
    </location>
</feature>
<feature type="glycosylation site" description="N-linked (GlcNAc...) asparagine" evidence="2">
    <location>
        <position position="150"/>
    </location>
</feature>
<feature type="glycosylation site" description="N-linked (GlcNAc...) asparagine" evidence="2">
    <location>
        <position position="177"/>
    </location>
</feature>
<feature type="glycosylation site" description="N-linked (GlcNAc...) asparagine" evidence="2">
    <location>
        <position position="186"/>
    </location>
</feature>
<feature type="glycosylation site" description="N-linked (GlcNAc...) asparagine" evidence="2">
    <location>
        <position position="208"/>
    </location>
</feature>
<feature type="glycosylation site" description="N-linked (GlcNAc...) asparagine" evidence="2">
    <location>
        <position position="217"/>
    </location>
</feature>
<feature type="glycosylation site" description="N-linked (GlcNAc...) asparagine" evidence="2">
    <location>
        <position position="234"/>
    </location>
</feature>
<feature type="glycosylation site" description="N-linked (GlcNAc...) asparagine" evidence="2">
    <location>
        <position position="240"/>
    </location>
</feature>
<feature type="glycosylation site" description="N-linked (GlcNAc...) asparagine" evidence="2">
    <location>
        <position position="315"/>
    </location>
</feature>
<feature type="glycosylation site" description="N-linked (GlcNAc...) asparagine" evidence="2">
    <location>
        <position position="332"/>
    </location>
</feature>
<feature type="glycosylation site" description="N-linked (GlcNAc...) asparagine" evidence="2">
    <location>
        <position position="382"/>
    </location>
</feature>
<feature type="glycosylation site" description="N-linked (GlcNAc...) asparagine" evidence="2">
    <location>
        <position position="405"/>
    </location>
</feature>
<feature type="sequence conflict" description="In Ref. 3; AA sequence." evidence="4" ref="3">
    <original>L</original>
    <variation>C</variation>
    <location>
        <position position="329"/>
    </location>
</feature>
<keyword id="KW-1003">Cell membrane</keyword>
<keyword id="KW-0961">Cell wall biogenesis/degradation</keyword>
<keyword id="KW-0903">Direct protein sequencing</keyword>
<keyword id="KW-0325">Glycoprotein</keyword>
<keyword id="KW-0336">GPI-anchor</keyword>
<keyword id="KW-0378">Hydrolase</keyword>
<keyword id="KW-0449">Lipoprotein</keyword>
<keyword id="KW-0472">Membrane</keyword>
<keyword id="KW-1185">Reference proteome</keyword>
<keyword id="KW-0732">Signal</keyword>
<comment type="function">
    <text>Has both phosphomonoesterase and phosphodiesterase activity. Cleaves a broad range of phosphate esters.</text>
</comment>
<comment type="catalytic activity">
    <reaction>
        <text>a phosphate monoester + H2O = an alcohol + phosphate</text>
        <dbReference type="Rhea" id="RHEA:15017"/>
        <dbReference type="ChEBI" id="CHEBI:15377"/>
        <dbReference type="ChEBI" id="CHEBI:30879"/>
        <dbReference type="ChEBI" id="CHEBI:43474"/>
        <dbReference type="ChEBI" id="CHEBI:67140"/>
        <dbReference type="EC" id="3.1.3.2"/>
    </reaction>
</comment>
<comment type="activity regulation">
    <text>Inhibited by NaF, molybdate and vanadate.</text>
</comment>
<comment type="biophysicochemical properties">
    <kinetics>
        <KM evidence="3">1.45 mM for p-nitrophenyl phosphate</KM>
        <KM evidence="3">2.3 mM for bis-(p-nitrophenyl) phosphate</KM>
    </kinetics>
    <phDependence>
        <text evidence="3">Optimum pH is 4-6. Active from pH 3 to 7.</text>
    </phDependence>
</comment>
<comment type="subcellular location">
    <subcellularLocation>
        <location>Cell membrane</location>
        <topology>Lipid-anchor</topology>
        <topology>GPI-anchor</topology>
    </subcellularLocation>
</comment>
<comment type="induction">
    <text evidence="3">Repressed by phosphate.</text>
</comment>
<comment type="PTM">
    <text>The GPI-like anchor contains a phosphoceramide lipid group. The anchor position has not been determined.</text>
</comment>
<comment type="sequence caution" evidence="4">
    <conflict type="erroneous gene model prediction">
        <sequence resource="EMBL-CDS" id="EAL88069"/>
    </conflict>
</comment>
<accession>Q8X176</accession>
<accession>Q4WK63</accession>
<protein>
    <recommendedName>
        <fullName>Acid phosphatase</fullName>
        <ecNumber>3.1.3.2</ecNumber>
    </recommendedName>
</protein>
<reference key="1">
    <citation type="journal article" date="2002" name="Microbiology">
        <title>Characterization of a cell-wall acid phosphatase (PhoAp) in Aspergillus fumigatus.</title>
        <authorList>
            <person name="Bernard M."/>
            <person name="Mouyna I."/>
            <person name="Dubreucq G."/>
            <person name="Debeaupuis J.-P."/>
            <person name="Fontaine T."/>
            <person name="Vorgias C."/>
            <person name="Fuglsang C."/>
            <person name="Latge J.-P."/>
        </authorList>
    </citation>
    <scope>NUCLEOTIDE SEQUENCE [GENOMIC DNA]</scope>
    <scope>PROTEIN SEQUENCE OF 260-274</scope>
    <scope>INDUCTION</scope>
    <scope>BIOPHYSICOCHEMICAL PROPERTIES</scope>
</reference>
<reference key="2">
    <citation type="journal article" date="2005" name="Nature">
        <title>Genomic sequence of the pathogenic and allergenic filamentous fungus Aspergillus fumigatus.</title>
        <authorList>
            <person name="Nierman W.C."/>
            <person name="Pain A."/>
            <person name="Anderson M.J."/>
            <person name="Wortman J.R."/>
            <person name="Kim H.S."/>
            <person name="Arroyo J."/>
            <person name="Berriman M."/>
            <person name="Abe K."/>
            <person name="Archer D.B."/>
            <person name="Bermejo C."/>
            <person name="Bennett J.W."/>
            <person name="Bowyer P."/>
            <person name="Chen D."/>
            <person name="Collins M."/>
            <person name="Coulsen R."/>
            <person name="Davies R."/>
            <person name="Dyer P.S."/>
            <person name="Farman M.L."/>
            <person name="Fedorova N."/>
            <person name="Fedorova N.D."/>
            <person name="Feldblyum T.V."/>
            <person name="Fischer R."/>
            <person name="Fosker N."/>
            <person name="Fraser A."/>
            <person name="Garcia J.L."/>
            <person name="Garcia M.J."/>
            <person name="Goble A."/>
            <person name="Goldman G.H."/>
            <person name="Gomi K."/>
            <person name="Griffith-Jones S."/>
            <person name="Gwilliam R."/>
            <person name="Haas B.J."/>
            <person name="Haas H."/>
            <person name="Harris D.E."/>
            <person name="Horiuchi H."/>
            <person name="Huang J."/>
            <person name="Humphray S."/>
            <person name="Jimenez J."/>
            <person name="Keller N."/>
            <person name="Khouri H."/>
            <person name="Kitamoto K."/>
            <person name="Kobayashi T."/>
            <person name="Konzack S."/>
            <person name="Kulkarni R."/>
            <person name="Kumagai T."/>
            <person name="Lafton A."/>
            <person name="Latge J.-P."/>
            <person name="Li W."/>
            <person name="Lord A."/>
            <person name="Lu C."/>
            <person name="Majoros W.H."/>
            <person name="May G.S."/>
            <person name="Miller B.L."/>
            <person name="Mohamoud Y."/>
            <person name="Molina M."/>
            <person name="Monod M."/>
            <person name="Mouyna I."/>
            <person name="Mulligan S."/>
            <person name="Murphy L.D."/>
            <person name="O'Neil S."/>
            <person name="Paulsen I."/>
            <person name="Penalva M.A."/>
            <person name="Pertea M."/>
            <person name="Price C."/>
            <person name="Pritchard B.L."/>
            <person name="Quail M.A."/>
            <person name="Rabbinowitsch E."/>
            <person name="Rawlins N."/>
            <person name="Rajandream M.A."/>
            <person name="Reichard U."/>
            <person name="Renauld H."/>
            <person name="Robson G.D."/>
            <person name="Rodriguez de Cordoba S."/>
            <person name="Rodriguez-Pena J.M."/>
            <person name="Ronning C.M."/>
            <person name="Rutter S."/>
            <person name="Salzberg S.L."/>
            <person name="Sanchez M."/>
            <person name="Sanchez-Ferrero J.C."/>
            <person name="Saunders D."/>
            <person name="Seeger K."/>
            <person name="Squares R."/>
            <person name="Squares S."/>
            <person name="Takeuchi M."/>
            <person name="Tekaia F."/>
            <person name="Turner G."/>
            <person name="Vazquez de Aldana C.R."/>
            <person name="Weidman J."/>
            <person name="White O."/>
            <person name="Woodward J.R."/>
            <person name="Yu J.-H."/>
            <person name="Fraser C.M."/>
            <person name="Galagan J.E."/>
            <person name="Asai K."/>
            <person name="Machida M."/>
            <person name="Hall N."/>
            <person name="Barrell B.G."/>
            <person name="Denning D.W."/>
        </authorList>
    </citation>
    <scope>NUCLEOTIDE SEQUENCE [LARGE SCALE GENOMIC DNA]</scope>
    <source>
        <strain>ATCC MYA-4609 / CBS 101355 / FGSC A1100 / Af293</strain>
    </source>
</reference>
<reference key="3">
    <citation type="journal article" date="2001" name="Electrophoresis">
        <title>Proteome analysis of Aspergillus fumigatus identifies glycosylphosphatidylinositol-anchored proteins associated to the cell wall biosynthesis.</title>
        <authorList>
            <person name="Bruneau J.-M."/>
            <person name="Magnin T."/>
            <person name="Tagat E."/>
            <person name="Legrand R."/>
            <person name="Bernard M."/>
            <person name="Diaquin M."/>
            <person name="Fudali C."/>
            <person name="Latge J.-P."/>
        </authorList>
    </citation>
    <scope>PROTEIN SEQUENCE OF 41-53; 164-176; 317-330 AND 347-350</scope>
    <scope>GPI-ANCHOR</scope>
</reference>
<reference key="4">
    <citation type="journal article" date="2003" name="Glycobiology">
        <title>Structures of the glycosylphosphatidylinositol membrane anchors from Aspergillus fumigatus membrane proteins.</title>
        <authorList>
            <person name="Fontaine T."/>
            <person name="Magnin T."/>
            <person name="Melhert A."/>
            <person name="Lamont D."/>
            <person name="Latge J.-P."/>
            <person name="Ferguson M.A.J."/>
        </authorList>
    </citation>
    <scope>PROTEIN SEQUENCE OF 317-323</scope>
    <scope>STRUCTURE OF GPI-ANCHOR</scope>
</reference>
<gene>
    <name type="primary">phoA</name>
    <name type="ORF">AFUA_1G03570</name>
</gene>